<reference key="1">
    <citation type="submission" date="2002-12" db="EMBL/GenBank/DDBJ databases">
        <title>Complete genome sequence of Vibrio vulnificus CMCP6.</title>
        <authorList>
            <person name="Rhee J.H."/>
            <person name="Kim S.Y."/>
            <person name="Chung S.S."/>
            <person name="Kim J.J."/>
            <person name="Moon Y.H."/>
            <person name="Jeong H."/>
            <person name="Choy H.E."/>
        </authorList>
    </citation>
    <scope>NUCLEOTIDE SEQUENCE [LARGE SCALE GENOMIC DNA]</scope>
    <source>
        <strain>CMCP6</strain>
    </source>
</reference>
<name>QUEA_VIBVU</name>
<gene>
    <name evidence="1" type="primary">queA</name>
    <name type="ordered locus">VV1_0446</name>
</gene>
<accession>Q8DEX9</accession>
<organism>
    <name type="scientific">Vibrio vulnificus (strain CMCP6)</name>
    <dbReference type="NCBI Taxonomy" id="216895"/>
    <lineage>
        <taxon>Bacteria</taxon>
        <taxon>Pseudomonadati</taxon>
        <taxon>Pseudomonadota</taxon>
        <taxon>Gammaproteobacteria</taxon>
        <taxon>Vibrionales</taxon>
        <taxon>Vibrionaceae</taxon>
        <taxon>Vibrio</taxon>
    </lineage>
</organism>
<protein>
    <recommendedName>
        <fullName evidence="1">S-adenosylmethionine:tRNA ribosyltransferase-isomerase</fullName>
        <ecNumber evidence="1">2.4.99.17</ecNumber>
    </recommendedName>
    <alternativeName>
        <fullName evidence="1">Queuosine biosynthesis protein QueA</fullName>
    </alternativeName>
</protein>
<keyword id="KW-0963">Cytoplasm</keyword>
<keyword id="KW-0671">Queuosine biosynthesis</keyword>
<keyword id="KW-0949">S-adenosyl-L-methionine</keyword>
<keyword id="KW-0808">Transferase</keyword>
<feature type="chain" id="PRO_0000165462" description="S-adenosylmethionine:tRNA ribosyltransferase-isomerase">
    <location>
        <begin position="1"/>
        <end position="350"/>
    </location>
</feature>
<sequence length="350" mass="39222">MQVSDFHFDLPDELIARYPQSERTASRLLQLNGNTGAVKDGSFKDVLELVQAGDLLVFNNTRVIPARMFGRKESGGKLEVLVERMLDEKRFLAHVRSSKSPKPGTLVFLGEEDQYSAEMVARQDALFELHLKADKTILEVLEEIGHMPLPPYIDRPDEDADKERYQTVYNQKPGAVAAPTAGLHFDNQLLEQIKAKGAEFAYVTLHVGAGTFQPVKVDNILEHHMHSEYAEVPQEVVDAINATKARGGRVIAVGTTSVRSLESAAQESLKNGTELMPFFGDTEIFIFPGYQYQLVDCLITNFHLPESTLIMLVSAFAGYDHTMNAYQHAVSNQYRFFSYGDAMFIEKKTQ</sequence>
<comment type="function">
    <text evidence="1">Transfers and isomerizes the ribose moiety from AdoMet to the 7-aminomethyl group of 7-deazaguanine (preQ1-tRNA) to give epoxyqueuosine (oQ-tRNA).</text>
</comment>
<comment type="catalytic activity">
    <reaction evidence="1">
        <text>7-aminomethyl-7-carbaguanosine(34) in tRNA + S-adenosyl-L-methionine = epoxyqueuosine(34) in tRNA + adenine + L-methionine + 2 H(+)</text>
        <dbReference type="Rhea" id="RHEA:32155"/>
        <dbReference type="Rhea" id="RHEA-COMP:10342"/>
        <dbReference type="Rhea" id="RHEA-COMP:18582"/>
        <dbReference type="ChEBI" id="CHEBI:15378"/>
        <dbReference type="ChEBI" id="CHEBI:16708"/>
        <dbReference type="ChEBI" id="CHEBI:57844"/>
        <dbReference type="ChEBI" id="CHEBI:59789"/>
        <dbReference type="ChEBI" id="CHEBI:82833"/>
        <dbReference type="ChEBI" id="CHEBI:194443"/>
        <dbReference type="EC" id="2.4.99.17"/>
    </reaction>
</comment>
<comment type="pathway">
    <text evidence="1">tRNA modification; tRNA-queuosine biosynthesis.</text>
</comment>
<comment type="subunit">
    <text evidence="1">Monomer.</text>
</comment>
<comment type="subcellular location">
    <subcellularLocation>
        <location evidence="1">Cytoplasm</location>
    </subcellularLocation>
</comment>
<comment type="similarity">
    <text evidence="1">Belongs to the QueA family.</text>
</comment>
<evidence type="ECO:0000255" key="1">
    <source>
        <dbReference type="HAMAP-Rule" id="MF_00113"/>
    </source>
</evidence>
<proteinExistence type="inferred from homology"/>
<dbReference type="EC" id="2.4.99.17" evidence="1"/>
<dbReference type="EMBL" id="AE016795">
    <property type="protein sequence ID" value="AAO08969.1"/>
    <property type="molecule type" value="Genomic_DNA"/>
</dbReference>
<dbReference type="RefSeq" id="WP_011078545.1">
    <property type="nucleotide sequence ID" value="NC_004459.3"/>
</dbReference>
<dbReference type="SMR" id="Q8DEX9"/>
<dbReference type="KEGG" id="vvu:VV1_0446"/>
<dbReference type="HOGENOM" id="CLU_039110_1_0_6"/>
<dbReference type="UniPathway" id="UPA00392"/>
<dbReference type="Proteomes" id="UP000002275">
    <property type="component" value="Chromosome 1"/>
</dbReference>
<dbReference type="GO" id="GO:0005737">
    <property type="term" value="C:cytoplasm"/>
    <property type="evidence" value="ECO:0007669"/>
    <property type="project" value="UniProtKB-SubCell"/>
</dbReference>
<dbReference type="GO" id="GO:0051075">
    <property type="term" value="F:S-adenosylmethionine:tRNA ribosyltransferase-isomerase activity"/>
    <property type="evidence" value="ECO:0007669"/>
    <property type="project" value="UniProtKB-EC"/>
</dbReference>
<dbReference type="GO" id="GO:0008616">
    <property type="term" value="P:queuosine biosynthetic process"/>
    <property type="evidence" value="ECO:0007669"/>
    <property type="project" value="UniProtKB-UniRule"/>
</dbReference>
<dbReference type="GO" id="GO:0002099">
    <property type="term" value="P:tRNA wobble guanine modification"/>
    <property type="evidence" value="ECO:0007669"/>
    <property type="project" value="TreeGrafter"/>
</dbReference>
<dbReference type="FunFam" id="2.40.10.240:FF:000001">
    <property type="entry name" value="S-adenosylmethionine:tRNA ribosyltransferase-isomerase"/>
    <property type="match status" value="1"/>
</dbReference>
<dbReference type="FunFam" id="3.40.1780.10:FF:000001">
    <property type="entry name" value="S-adenosylmethionine:tRNA ribosyltransferase-isomerase"/>
    <property type="match status" value="1"/>
</dbReference>
<dbReference type="Gene3D" id="2.40.10.240">
    <property type="entry name" value="QueA-like"/>
    <property type="match status" value="1"/>
</dbReference>
<dbReference type="Gene3D" id="3.40.1780.10">
    <property type="entry name" value="QueA-like"/>
    <property type="match status" value="1"/>
</dbReference>
<dbReference type="HAMAP" id="MF_00113">
    <property type="entry name" value="QueA"/>
    <property type="match status" value="1"/>
</dbReference>
<dbReference type="InterPro" id="IPR003699">
    <property type="entry name" value="QueA"/>
</dbReference>
<dbReference type="InterPro" id="IPR042118">
    <property type="entry name" value="QueA_dom1"/>
</dbReference>
<dbReference type="InterPro" id="IPR042119">
    <property type="entry name" value="QueA_dom2"/>
</dbReference>
<dbReference type="InterPro" id="IPR036100">
    <property type="entry name" value="QueA_sf"/>
</dbReference>
<dbReference type="NCBIfam" id="NF001140">
    <property type="entry name" value="PRK00147.1"/>
    <property type="match status" value="1"/>
</dbReference>
<dbReference type="NCBIfam" id="TIGR00113">
    <property type="entry name" value="queA"/>
    <property type="match status" value="1"/>
</dbReference>
<dbReference type="PANTHER" id="PTHR30307">
    <property type="entry name" value="S-ADENOSYLMETHIONINE:TRNA RIBOSYLTRANSFERASE-ISOMERASE"/>
    <property type="match status" value="1"/>
</dbReference>
<dbReference type="PANTHER" id="PTHR30307:SF0">
    <property type="entry name" value="S-ADENOSYLMETHIONINE:TRNA RIBOSYLTRANSFERASE-ISOMERASE"/>
    <property type="match status" value="1"/>
</dbReference>
<dbReference type="Pfam" id="PF02547">
    <property type="entry name" value="Queuosine_synth"/>
    <property type="match status" value="1"/>
</dbReference>
<dbReference type="SUPFAM" id="SSF111337">
    <property type="entry name" value="QueA-like"/>
    <property type="match status" value="1"/>
</dbReference>